<organism>
    <name type="scientific">Haloferax volcanii (strain ATCC 29605 / DSM 3757 / JCM 8879 / NBRC 14742 / NCIMB 2012 / VKM B-1768 / DS2)</name>
    <name type="common">Halobacterium volcanii</name>
    <dbReference type="NCBI Taxonomy" id="309800"/>
    <lineage>
        <taxon>Archaea</taxon>
        <taxon>Methanobacteriati</taxon>
        <taxon>Methanobacteriota</taxon>
        <taxon>Stenosarchaea group</taxon>
        <taxon>Halobacteria</taxon>
        <taxon>Halobacteriales</taxon>
        <taxon>Haloferacaceae</taxon>
        <taxon>Haloferax</taxon>
    </lineage>
</organism>
<proteinExistence type="inferred from homology"/>
<evidence type="ECO:0000250" key="1"/>
<evidence type="ECO:0000269" key="2">
    <source>
    </source>
</evidence>
<evidence type="ECO:0000305" key="3"/>
<sequence>MPNIHDVEVRDLQVNADQRGHLVEVFRSDWDEYEIDPEMSYYSMTYPGVVRAWHRHLEGQIDHFVCPKGRITVGIYDDREDSPTQGELDTFVIGEHNQQVIRIPGDCWHGFKAIGDEPSLLINYPTNLYDYEDPDEERIPYDDDRIPYDWNAEIHG</sequence>
<dbReference type="EC" id="5.1.3.-"/>
<dbReference type="EMBL" id="CP001956">
    <property type="protein sequence ID" value="ADE02686.1"/>
    <property type="molecule type" value="Genomic_DNA"/>
</dbReference>
<dbReference type="EMBL" id="AOHU01000040">
    <property type="protein sequence ID" value="ELY33649.1"/>
    <property type="molecule type" value="Genomic_DNA"/>
</dbReference>
<dbReference type="RefSeq" id="WP_004041940.1">
    <property type="nucleotide sequence ID" value="NC_013967.1"/>
</dbReference>
<dbReference type="SMR" id="D4GU69"/>
<dbReference type="STRING" id="309800.HVO_2056"/>
<dbReference type="PaxDb" id="309800-C498_05563"/>
<dbReference type="EnsemblBacteria" id="ADE02686">
    <property type="protein sequence ID" value="ADE02686"/>
    <property type="gene ID" value="HVO_2056"/>
</dbReference>
<dbReference type="GeneID" id="8926740"/>
<dbReference type="KEGG" id="hvo:HVO_2056"/>
<dbReference type="PATRIC" id="fig|309800.29.peg.1079"/>
<dbReference type="eggNOG" id="arCOG04188">
    <property type="taxonomic scope" value="Archaea"/>
</dbReference>
<dbReference type="HOGENOM" id="CLU_090940_3_0_2"/>
<dbReference type="OrthoDB" id="49399at2157"/>
<dbReference type="BioCyc" id="MetaCyc:MONOMER-18753"/>
<dbReference type="BRENDA" id="5.1.3.13">
    <property type="organism ID" value="2561"/>
</dbReference>
<dbReference type="UniPathway" id="UPA00378"/>
<dbReference type="UniPathway" id="UPA00977"/>
<dbReference type="Proteomes" id="UP000008243">
    <property type="component" value="Chromosome"/>
</dbReference>
<dbReference type="Proteomes" id="UP000011532">
    <property type="component" value="Unassembled WGS sequence"/>
</dbReference>
<dbReference type="GO" id="GO:0005829">
    <property type="term" value="C:cytosol"/>
    <property type="evidence" value="ECO:0007669"/>
    <property type="project" value="TreeGrafter"/>
</dbReference>
<dbReference type="GO" id="GO:0008830">
    <property type="term" value="F:dTDP-4-dehydrorhamnose 3,5-epimerase activity"/>
    <property type="evidence" value="ECO:0007669"/>
    <property type="project" value="InterPro"/>
</dbReference>
<dbReference type="GO" id="GO:0000271">
    <property type="term" value="P:polysaccharide biosynthetic process"/>
    <property type="evidence" value="ECO:0007669"/>
    <property type="project" value="TreeGrafter"/>
</dbReference>
<dbReference type="GO" id="GO:0006486">
    <property type="term" value="P:protein glycosylation"/>
    <property type="evidence" value="ECO:0007669"/>
    <property type="project" value="UniProtKB-UniPathway"/>
</dbReference>
<dbReference type="GO" id="GO:0045232">
    <property type="term" value="P:S-layer organization"/>
    <property type="evidence" value="ECO:0007669"/>
    <property type="project" value="UniProtKB-UniPathway"/>
</dbReference>
<dbReference type="Gene3D" id="2.60.120.10">
    <property type="entry name" value="Jelly Rolls"/>
    <property type="match status" value="1"/>
</dbReference>
<dbReference type="InterPro" id="IPR000888">
    <property type="entry name" value="RmlC-like"/>
</dbReference>
<dbReference type="InterPro" id="IPR014710">
    <property type="entry name" value="RmlC-like_jellyroll"/>
</dbReference>
<dbReference type="InterPro" id="IPR011051">
    <property type="entry name" value="RmlC_Cupin_sf"/>
</dbReference>
<dbReference type="PANTHER" id="PTHR21047">
    <property type="entry name" value="DTDP-6-DEOXY-D-GLUCOSE-3,5 EPIMERASE"/>
    <property type="match status" value="1"/>
</dbReference>
<dbReference type="PANTHER" id="PTHR21047:SF2">
    <property type="entry name" value="THYMIDINE DIPHOSPHO-4-KETO-RHAMNOSE 3,5-EPIMERASE"/>
    <property type="match status" value="1"/>
</dbReference>
<dbReference type="Pfam" id="PF00908">
    <property type="entry name" value="dTDP_sugar_isom"/>
    <property type="match status" value="1"/>
</dbReference>
<dbReference type="SUPFAM" id="SSF51182">
    <property type="entry name" value="RmlC-like cupins"/>
    <property type="match status" value="1"/>
</dbReference>
<reference key="1">
    <citation type="journal article" date="2010" name="PLoS ONE">
        <title>The complete genome sequence of Haloferax volcanii DS2, a model archaeon.</title>
        <authorList>
            <person name="Hartman A.L."/>
            <person name="Norais C."/>
            <person name="Badger J.H."/>
            <person name="Delmas S."/>
            <person name="Haldenby S."/>
            <person name="Madupu R."/>
            <person name="Robinson J."/>
            <person name="Khouri H."/>
            <person name="Ren Q."/>
            <person name="Lowe T.M."/>
            <person name="Maupin-Furlow J."/>
            <person name="Pohlschroder M."/>
            <person name="Daniels C."/>
            <person name="Pfeiffer F."/>
            <person name="Allers T."/>
            <person name="Eisen J.A."/>
        </authorList>
    </citation>
    <scope>NUCLEOTIDE SEQUENCE [LARGE SCALE GENOMIC DNA]</scope>
    <source>
        <strain>ATCC 29605 / DSM 3757 / JCM 8879 / NBRC 14742 / NCIMB 2012 / VKM B-1768 / DS2</strain>
    </source>
</reference>
<reference key="2">
    <citation type="journal article" date="2014" name="PLoS Genet.">
        <title>Phylogenetically driven sequencing of extremely halophilic archaea reveals strategies for static and dynamic osmo-response.</title>
        <authorList>
            <person name="Becker E.A."/>
            <person name="Seitzer P.M."/>
            <person name="Tritt A."/>
            <person name="Larsen D."/>
            <person name="Krusor M."/>
            <person name="Yao A.I."/>
            <person name="Wu D."/>
            <person name="Madern D."/>
            <person name="Eisen J.A."/>
            <person name="Darling A.E."/>
            <person name="Facciotti M.T."/>
        </authorList>
    </citation>
    <scope>NUCLEOTIDE SEQUENCE [LARGE SCALE GENOMIC DNA]</scope>
    <source>
        <strain>ATCC 29605 / DSM 3757 / JCM 8879 / NBRC 14742 / NCIMB 2012 / VKM B-1768 / DS2</strain>
    </source>
</reference>
<reference key="3">
    <citation type="journal article" date="2013" name="MBio">
        <title>Two distinct N-glycosylation pathways process the Haloferax volcanii S-layer glycoprotein upon changes in environmental salinity.</title>
        <authorList>
            <person name="Kaminski L."/>
            <person name="Guan Z."/>
            <person name="Yurist-Doutsch S."/>
            <person name="Eichler J."/>
        </authorList>
    </citation>
    <scope>FUNCTION</scope>
    <scope>PATHWAY</scope>
    <scope>DISRUPTION PHENOTYPE</scope>
    <source>
        <strain>ATCC 29605 / DSM 3757 / JCM 8879 / NBRC 14742 / NCIMB 2012 / VKM B-1768 / DS2</strain>
    </source>
</reference>
<protein>
    <recommendedName>
        <fullName>Probable low-salt glycan biosynthesis epimerase Agl13</fullName>
        <ecNumber>5.1.3.-</ecNumber>
    </recommendedName>
</protein>
<feature type="chain" id="PRO_0000428776" description="Probable low-salt glycan biosynthesis epimerase Agl13">
    <location>
        <begin position="1"/>
        <end position="156"/>
    </location>
</feature>
<feature type="binding site" evidence="1">
    <location>
        <position position="19"/>
    </location>
    <ligand>
        <name>substrate</name>
    </ligand>
</feature>
<feature type="binding site" evidence="1">
    <location>
        <position position="24"/>
    </location>
    <ligand>
        <name>substrate</name>
    </ligand>
</feature>
<feature type="binding site" evidence="1">
    <location>
        <begin position="39"/>
        <end position="41"/>
    </location>
    <ligand>
        <name>substrate</name>
    </ligand>
</feature>
<feature type="binding site" evidence="1">
    <location>
        <position position="51"/>
    </location>
    <ligand>
        <name>substrate</name>
    </ligand>
</feature>
<feature type="binding site" evidence="1">
    <location>
        <position position="54"/>
    </location>
    <ligand>
        <name>substrate</name>
    </ligand>
</feature>
<feature type="binding site" evidence="1">
    <location>
        <position position="109"/>
    </location>
    <ligand>
        <name>substrate</name>
    </ligand>
</feature>
<accession>D4GU69</accession>
<keyword id="KW-0413">Isomerase</keyword>
<keyword id="KW-1185">Reference proteome</keyword>
<gene>
    <name type="primary">agl13</name>
    <name type="ordered locus">HVO_2056</name>
    <name type="ORF">C498_05563</name>
</gene>
<name>AGL13_HALVD</name>
<comment type="function">
    <text evidence="2">Epimerase involved in N-glycan biosynthetic pathway that takes place under low-salt conditions (1.75 M instead of 3.4 M). Participates in the formation of the tetrasaccharide present at 'Asn-532' of S-layer glycoprotein Csg, consisting of a sulfated hexose, 2 hexoses and rhamnose. Involved in the addition of final rhamnose (sugar 4) of the tetrasaccharide on the dolichol phosphate carrier.</text>
</comment>
<comment type="pathway">
    <text evidence="2">Protein modification; protein glycosylation.</text>
</comment>
<comment type="pathway">
    <text evidence="2">Cell surface structure biogenesis; S-layer biogenesis.</text>
</comment>
<comment type="disruption phenotype">
    <text evidence="2">Impaired formation of the tetrasaccharide present at 'Asn-532' of S-layer glycoprotein Csg. No effect on 'Asn-47' and 'Asn-117' glycosylation of S-layer glycoprotein Csg.</text>
</comment>
<comment type="similarity">
    <text evidence="3">Belongs to the dTDP-4-dehydrorhamnose 3,5-epimerase family.</text>
</comment>